<proteinExistence type="evidence at protein level"/>
<protein>
    <recommendedName>
        <fullName>Zinc finger protein 771</fullName>
    </recommendedName>
    <alternativeName>
        <fullName>Mesenchymal stem cell protein DSC43</fullName>
    </alternativeName>
</protein>
<sequence length="317" mass="35702">MPGEQQAEEEEEEEMQEEMVLLVKGEEDEGEEKYEVVKLKIPMDNKEVPGEAPAPSADPARPHACPDCGRAFARRSTLAKHARTHTGERPFGCTECGRRFSQKSALTKHGRTHTGERPYECPECDKRFSAASNLRQHRRRHTGEKPYACAHCGRRFAQSSNYAQHLRVHTGEKPYACPDCGRAFGGSSCLARHRRTHTGERPYACADCGTRFAQSSALAKHRRVHTGEKPHRCAVCGRRFGHRSNLAEHARTHTGERPYPCAECGRRFRLSSHFIRHRRAHMRRRLYICAGCGRDFKLPPGATAATATERCPECEGS</sequence>
<reference key="1">
    <citation type="journal article" date="2004" name="Genome Res.">
        <title>The status, quality, and expansion of the NIH full-length cDNA project: the Mammalian Gene Collection (MGC).</title>
        <authorList>
            <consortium name="The MGC Project Team"/>
        </authorList>
    </citation>
    <scope>NUCLEOTIDE SEQUENCE [LARGE SCALE MRNA]</scope>
    <scope>VARIANT ASN-207</scope>
    <source>
        <tissue>Brain</tissue>
        <tissue>Muscle</tissue>
    </source>
</reference>
<reference key="2">
    <citation type="submission" date="2000-03" db="EMBL/GenBank/DDBJ databases">
        <title>cDNA DSC43 expressed by osteogenic human mesenchymal stem cells.</title>
        <authorList>
            <person name="van den Bos C."/>
            <person name="Mbalaviele G."/>
            <person name="Thiede M."/>
        </authorList>
    </citation>
    <scope>NUCLEOTIDE SEQUENCE [MRNA] OF 35-317</scope>
</reference>
<reference key="3">
    <citation type="journal article" date="2011" name="BMC Syst. Biol.">
        <title>Initial characterization of the human central proteome.</title>
        <authorList>
            <person name="Burkard T.R."/>
            <person name="Planyavsky M."/>
            <person name="Kaupe I."/>
            <person name="Breitwieser F.P."/>
            <person name="Buerckstuemmer T."/>
            <person name="Bennett K.L."/>
            <person name="Superti-Furga G."/>
            <person name="Colinge J."/>
        </authorList>
    </citation>
    <scope>IDENTIFICATION BY MASS SPECTROMETRY [LARGE SCALE ANALYSIS]</scope>
</reference>
<reference key="4">
    <citation type="journal article" date="2017" name="Nat. Struct. Mol. Biol.">
        <title>Site-specific mapping of the human SUMO proteome reveals co-modification with phosphorylation.</title>
        <authorList>
            <person name="Hendriks I.A."/>
            <person name="Lyon D."/>
            <person name="Young C."/>
            <person name="Jensen L.J."/>
            <person name="Vertegaal A.C."/>
            <person name="Nielsen M.L."/>
        </authorList>
    </citation>
    <scope>SUMOYLATION [LARGE SCALE ANALYSIS] AT LYS-33</scope>
    <scope>IDENTIFICATION BY MASS SPECTROMETRY [LARGE SCALE ANALYSIS]</scope>
</reference>
<accession>Q7L3S4</accession>
<accession>Q8TAQ7</accession>
<accession>Q9NYI6</accession>
<keyword id="KW-0238">DNA-binding</keyword>
<keyword id="KW-1017">Isopeptide bond</keyword>
<keyword id="KW-0479">Metal-binding</keyword>
<keyword id="KW-0539">Nucleus</keyword>
<keyword id="KW-1267">Proteomics identification</keyword>
<keyword id="KW-1185">Reference proteome</keyword>
<keyword id="KW-0677">Repeat</keyword>
<keyword id="KW-0804">Transcription</keyword>
<keyword id="KW-0805">Transcription regulation</keyword>
<keyword id="KW-0832">Ubl conjugation</keyword>
<keyword id="KW-0862">Zinc</keyword>
<keyword id="KW-0863">Zinc-finger</keyword>
<gene>
    <name type="primary">ZNF771</name>
</gene>
<evidence type="ECO:0000255" key="1">
    <source>
        <dbReference type="PROSITE-ProRule" id="PRU00042"/>
    </source>
</evidence>
<evidence type="ECO:0000256" key="2">
    <source>
        <dbReference type="SAM" id="MobiDB-lite"/>
    </source>
</evidence>
<evidence type="ECO:0000269" key="3">
    <source>
    </source>
</evidence>
<evidence type="ECO:0000305" key="4"/>
<evidence type="ECO:0007744" key="5">
    <source>
    </source>
</evidence>
<comment type="function">
    <text>May be involved in transcriptional regulation.</text>
</comment>
<comment type="subcellular location">
    <subcellularLocation>
        <location evidence="4">Nucleus</location>
    </subcellularLocation>
</comment>
<comment type="similarity">
    <text evidence="4">Belongs to the krueppel C2H2-type zinc-finger protein family.</text>
</comment>
<comment type="sequence caution" evidence="4">
    <conflict type="erroneous initiation">
        <sequence resource="EMBL-CDS" id="AAF65445"/>
    </conflict>
</comment>
<dbReference type="EMBL" id="BC011870">
    <property type="protein sequence ID" value="AAH11870.2"/>
    <property type="molecule type" value="mRNA"/>
</dbReference>
<dbReference type="EMBL" id="BC026192">
    <property type="protein sequence ID" value="AAH26192.2"/>
    <property type="molecule type" value="mRNA"/>
</dbReference>
<dbReference type="EMBL" id="AF242768">
    <property type="protein sequence ID" value="AAF65445.1"/>
    <property type="status" value="ALT_INIT"/>
    <property type="molecule type" value="mRNA"/>
</dbReference>
<dbReference type="CCDS" id="CCDS45460.1"/>
<dbReference type="RefSeq" id="NP_001135777.1">
    <property type="nucleotide sequence ID" value="NM_001142305.2"/>
</dbReference>
<dbReference type="RefSeq" id="NP_057727.2">
    <property type="nucleotide sequence ID" value="NM_016643.4"/>
</dbReference>
<dbReference type="SMR" id="Q7L3S4"/>
<dbReference type="BioGRID" id="119480">
    <property type="interactions" value="257"/>
</dbReference>
<dbReference type="FunCoup" id="Q7L3S4">
    <property type="interactions" value="563"/>
</dbReference>
<dbReference type="IntAct" id="Q7L3S4">
    <property type="interactions" value="50"/>
</dbReference>
<dbReference type="STRING" id="9606.ENSP00000323945"/>
<dbReference type="iPTMnet" id="Q7L3S4"/>
<dbReference type="PhosphoSitePlus" id="Q7L3S4"/>
<dbReference type="BioMuta" id="ZNF771"/>
<dbReference type="DMDM" id="74759003"/>
<dbReference type="jPOST" id="Q7L3S4"/>
<dbReference type="MassIVE" id="Q7L3S4"/>
<dbReference type="PaxDb" id="9606-ENSP00000323945"/>
<dbReference type="PeptideAtlas" id="Q7L3S4"/>
<dbReference type="ProteomicsDB" id="68771"/>
<dbReference type="Pumba" id="Q7L3S4"/>
<dbReference type="Antibodypedia" id="27266">
    <property type="antibodies" value="74 antibodies from 19 providers"/>
</dbReference>
<dbReference type="DNASU" id="51333"/>
<dbReference type="Ensembl" id="ENST00000319296.10">
    <property type="protein sequence ID" value="ENSP00000323945.5"/>
    <property type="gene ID" value="ENSG00000179965.12"/>
</dbReference>
<dbReference type="Ensembl" id="ENST00000434417.1">
    <property type="protein sequence ID" value="ENSP00000416197.1"/>
    <property type="gene ID" value="ENSG00000179965.12"/>
</dbReference>
<dbReference type="GeneID" id="51333"/>
<dbReference type="KEGG" id="hsa:51333"/>
<dbReference type="MANE-Select" id="ENST00000319296.10">
    <property type="protein sequence ID" value="ENSP00000323945.5"/>
    <property type="RefSeq nucleotide sequence ID" value="NM_001142305.2"/>
    <property type="RefSeq protein sequence ID" value="NP_001135777.1"/>
</dbReference>
<dbReference type="UCSC" id="uc002dyd.4">
    <property type="organism name" value="human"/>
</dbReference>
<dbReference type="AGR" id="HGNC:29653"/>
<dbReference type="CTD" id="51333"/>
<dbReference type="DisGeNET" id="51333"/>
<dbReference type="GeneCards" id="ZNF771"/>
<dbReference type="HGNC" id="HGNC:29653">
    <property type="gene designation" value="ZNF771"/>
</dbReference>
<dbReference type="HPA" id="ENSG00000179965">
    <property type="expression patterns" value="Low tissue specificity"/>
</dbReference>
<dbReference type="neXtProt" id="NX_Q7L3S4"/>
<dbReference type="PharmGKB" id="PA162410347"/>
<dbReference type="VEuPathDB" id="HostDB:ENSG00000179965"/>
<dbReference type="eggNOG" id="KOG1721">
    <property type="taxonomic scope" value="Eukaryota"/>
</dbReference>
<dbReference type="GeneTree" id="ENSGT00940000162367"/>
<dbReference type="HOGENOM" id="CLU_002678_2_6_1"/>
<dbReference type="InParanoid" id="Q7L3S4"/>
<dbReference type="OMA" id="RLYICEG"/>
<dbReference type="OrthoDB" id="8113227at2759"/>
<dbReference type="PAN-GO" id="Q7L3S4">
    <property type="GO annotations" value="4 GO annotations based on evolutionary models"/>
</dbReference>
<dbReference type="PhylomeDB" id="Q7L3S4"/>
<dbReference type="TreeFam" id="TF337055"/>
<dbReference type="PathwayCommons" id="Q7L3S4"/>
<dbReference type="Reactome" id="R-HSA-212436">
    <property type="pathway name" value="Generic Transcription Pathway"/>
</dbReference>
<dbReference type="SignaLink" id="Q7L3S4"/>
<dbReference type="BioGRID-ORCS" id="51333">
    <property type="hits" value="21 hits in 1177 CRISPR screens"/>
</dbReference>
<dbReference type="ChiTaRS" id="ZNF771">
    <property type="organism name" value="human"/>
</dbReference>
<dbReference type="GenomeRNAi" id="51333"/>
<dbReference type="Pharos" id="Q7L3S4">
    <property type="development level" value="Tdark"/>
</dbReference>
<dbReference type="PRO" id="PR:Q7L3S4"/>
<dbReference type="Proteomes" id="UP000005640">
    <property type="component" value="Chromosome 16"/>
</dbReference>
<dbReference type="RNAct" id="Q7L3S4">
    <property type="molecule type" value="protein"/>
</dbReference>
<dbReference type="Bgee" id="ENSG00000179965">
    <property type="expression patterns" value="Expressed in buccal mucosa cell and 103 other cell types or tissues"/>
</dbReference>
<dbReference type="ExpressionAtlas" id="Q7L3S4">
    <property type="expression patterns" value="baseline and differential"/>
</dbReference>
<dbReference type="GO" id="GO:0005730">
    <property type="term" value="C:nucleolus"/>
    <property type="evidence" value="ECO:0000314"/>
    <property type="project" value="HPA"/>
</dbReference>
<dbReference type="GO" id="GO:0005654">
    <property type="term" value="C:nucleoplasm"/>
    <property type="evidence" value="ECO:0000314"/>
    <property type="project" value="HPA"/>
</dbReference>
<dbReference type="GO" id="GO:0005634">
    <property type="term" value="C:nucleus"/>
    <property type="evidence" value="ECO:0000318"/>
    <property type="project" value="GO_Central"/>
</dbReference>
<dbReference type="GO" id="GO:0000981">
    <property type="term" value="F:DNA-binding transcription factor activity, RNA polymerase II-specific"/>
    <property type="evidence" value="ECO:0000318"/>
    <property type="project" value="GO_Central"/>
</dbReference>
<dbReference type="GO" id="GO:1990837">
    <property type="term" value="F:sequence-specific double-stranded DNA binding"/>
    <property type="evidence" value="ECO:0000314"/>
    <property type="project" value="ARUK-UCL"/>
</dbReference>
<dbReference type="GO" id="GO:0008270">
    <property type="term" value="F:zinc ion binding"/>
    <property type="evidence" value="ECO:0007669"/>
    <property type="project" value="UniProtKB-KW"/>
</dbReference>
<dbReference type="GO" id="GO:0006357">
    <property type="term" value="P:regulation of transcription by RNA polymerase II"/>
    <property type="evidence" value="ECO:0000318"/>
    <property type="project" value="GO_Central"/>
</dbReference>
<dbReference type="FunFam" id="3.30.160.60:FF:000212">
    <property type="entry name" value="zinc finger protein 382 isoform X2"/>
    <property type="match status" value="1"/>
</dbReference>
<dbReference type="FunFam" id="3.30.160.60:FF:001199">
    <property type="entry name" value="Zinc finger protein 771"/>
    <property type="match status" value="1"/>
</dbReference>
<dbReference type="FunFam" id="3.30.160.60:FF:001280">
    <property type="entry name" value="Zinc finger protein 771"/>
    <property type="match status" value="1"/>
</dbReference>
<dbReference type="FunFam" id="3.30.160.60:FF:000516">
    <property type="entry name" value="zinc finger protein 771"/>
    <property type="match status" value="3"/>
</dbReference>
<dbReference type="FunFam" id="3.30.160.60:FF:000933">
    <property type="entry name" value="zinc finger protein 771"/>
    <property type="match status" value="1"/>
</dbReference>
<dbReference type="FunFam" id="3.30.160.60:FF:001323">
    <property type="entry name" value="zinc finger protein 771"/>
    <property type="match status" value="1"/>
</dbReference>
<dbReference type="Gene3D" id="3.30.160.60">
    <property type="entry name" value="Classic Zinc Finger"/>
    <property type="match status" value="8"/>
</dbReference>
<dbReference type="InterPro" id="IPR036236">
    <property type="entry name" value="Znf_C2H2_sf"/>
</dbReference>
<dbReference type="InterPro" id="IPR013087">
    <property type="entry name" value="Znf_C2H2_type"/>
</dbReference>
<dbReference type="PANTHER" id="PTHR24393">
    <property type="entry name" value="ZINC FINGER PROTEIN"/>
    <property type="match status" value="1"/>
</dbReference>
<dbReference type="PANTHER" id="PTHR24393:SF166">
    <property type="entry name" value="ZINC FINGER PROTEIN 771"/>
    <property type="match status" value="1"/>
</dbReference>
<dbReference type="Pfam" id="PF00096">
    <property type="entry name" value="zf-C2H2"/>
    <property type="match status" value="8"/>
</dbReference>
<dbReference type="SMART" id="SM00355">
    <property type="entry name" value="ZnF_C2H2"/>
    <property type="match status" value="8"/>
</dbReference>
<dbReference type="SUPFAM" id="SSF57667">
    <property type="entry name" value="beta-beta-alpha zinc fingers"/>
    <property type="match status" value="5"/>
</dbReference>
<dbReference type="PROSITE" id="PS00028">
    <property type="entry name" value="ZINC_FINGER_C2H2_1"/>
    <property type="match status" value="8"/>
</dbReference>
<dbReference type="PROSITE" id="PS50157">
    <property type="entry name" value="ZINC_FINGER_C2H2_2"/>
    <property type="match status" value="8"/>
</dbReference>
<organism>
    <name type="scientific">Homo sapiens</name>
    <name type="common">Human</name>
    <dbReference type="NCBI Taxonomy" id="9606"/>
    <lineage>
        <taxon>Eukaryota</taxon>
        <taxon>Metazoa</taxon>
        <taxon>Chordata</taxon>
        <taxon>Craniata</taxon>
        <taxon>Vertebrata</taxon>
        <taxon>Euteleostomi</taxon>
        <taxon>Mammalia</taxon>
        <taxon>Eutheria</taxon>
        <taxon>Euarchontoglires</taxon>
        <taxon>Primates</taxon>
        <taxon>Haplorrhini</taxon>
        <taxon>Catarrhini</taxon>
        <taxon>Hominidae</taxon>
        <taxon>Homo</taxon>
    </lineage>
</organism>
<feature type="chain" id="PRO_0000280439" description="Zinc finger protein 771">
    <location>
        <begin position="1"/>
        <end position="317"/>
    </location>
</feature>
<feature type="zinc finger region" description="C2H2-type 1" evidence="1">
    <location>
        <begin position="63"/>
        <end position="85"/>
    </location>
</feature>
<feature type="zinc finger region" description="C2H2-type 2" evidence="1">
    <location>
        <begin position="91"/>
        <end position="113"/>
    </location>
</feature>
<feature type="zinc finger region" description="C2H2-type 3" evidence="1">
    <location>
        <begin position="119"/>
        <end position="141"/>
    </location>
</feature>
<feature type="zinc finger region" description="C2H2-type 4" evidence="1">
    <location>
        <begin position="147"/>
        <end position="169"/>
    </location>
</feature>
<feature type="zinc finger region" description="C2H2-type 5" evidence="1">
    <location>
        <begin position="175"/>
        <end position="197"/>
    </location>
</feature>
<feature type="zinc finger region" description="C2H2-type 6" evidence="1">
    <location>
        <begin position="203"/>
        <end position="225"/>
    </location>
</feature>
<feature type="zinc finger region" description="C2H2-type 7" evidence="1">
    <location>
        <begin position="231"/>
        <end position="253"/>
    </location>
</feature>
<feature type="zinc finger region" description="C2H2-type 8" evidence="1">
    <location>
        <begin position="259"/>
        <end position="281"/>
    </location>
</feature>
<feature type="region of interest" description="Disordered" evidence="2">
    <location>
        <begin position="1"/>
        <end position="63"/>
    </location>
</feature>
<feature type="compositionally biased region" description="Acidic residues" evidence="2">
    <location>
        <begin position="1"/>
        <end position="17"/>
    </location>
</feature>
<feature type="compositionally biased region" description="Basic and acidic residues" evidence="2">
    <location>
        <begin position="33"/>
        <end position="49"/>
    </location>
</feature>
<feature type="cross-link" description="Glycyl lysine isopeptide (Lys-Gly) (interchain with G-Cter in SUMO2)" evidence="5">
    <location>
        <position position="33"/>
    </location>
</feature>
<feature type="sequence variant" id="VAR_031150" description="In dbSNP:rs17852362." evidence="3">
    <original>D</original>
    <variation>N</variation>
    <location>
        <position position="207"/>
    </location>
</feature>
<name>ZN771_HUMAN</name>